<dbReference type="EC" id="4.2.99.20" evidence="1"/>
<dbReference type="EMBL" id="BX571869">
    <property type="protein sequence ID" value="CAE15446.1"/>
    <property type="molecule type" value="Genomic_DNA"/>
</dbReference>
<dbReference type="RefSeq" id="WP_011147289.1">
    <property type="nucleotide sequence ID" value="NC_005126.1"/>
</dbReference>
<dbReference type="SMR" id="Q7N2K4"/>
<dbReference type="STRING" id="243265.plu3072"/>
<dbReference type="ESTHER" id="pholl-q7n2k4">
    <property type="family name" value="MenH_SHCHC"/>
</dbReference>
<dbReference type="GeneID" id="48849333"/>
<dbReference type="KEGG" id="plu:plu3072"/>
<dbReference type="eggNOG" id="COG0596">
    <property type="taxonomic scope" value="Bacteria"/>
</dbReference>
<dbReference type="HOGENOM" id="CLU_020336_38_2_6"/>
<dbReference type="OrthoDB" id="9808398at2"/>
<dbReference type="UniPathway" id="UPA00079"/>
<dbReference type="UniPathway" id="UPA01057">
    <property type="reaction ID" value="UER00900"/>
</dbReference>
<dbReference type="Proteomes" id="UP000002514">
    <property type="component" value="Chromosome"/>
</dbReference>
<dbReference type="GO" id="GO:0070205">
    <property type="term" value="F:2-succinyl-6-hydroxy-2,4-cyclohexadiene-1-carboxylate synthase activity"/>
    <property type="evidence" value="ECO:0007669"/>
    <property type="project" value="UniProtKB-UniRule"/>
</dbReference>
<dbReference type="GO" id="GO:0009234">
    <property type="term" value="P:menaquinone biosynthetic process"/>
    <property type="evidence" value="ECO:0007669"/>
    <property type="project" value="UniProtKB-UniRule"/>
</dbReference>
<dbReference type="Gene3D" id="3.40.50.1820">
    <property type="entry name" value="alpha/beta hydrolase"/>
    <property type="match status" value="1"/>
</dbReference>
<dbReference type="HAMAP" id="MF_01660">
    <property type="entry name" value="MenH"/>
    <property type="match status" value="1"/>
</dbReference>
<dbReference type="InterPro" id="IPR000073">
    <property type="entry name" value="AB_hydrolase_1"/>
</dbReference>
<dbReference type="InterPro" id="IPR029058">
    <property type="entry name" value="AB_hydrolase_fold"/>
</dbReference>
<dbReference type="InterPro" id="IPR022485">
    <property type="entry name" value="SHCHC_synthase_MenH"/>
</dbReference>
<dbReference type="NCBIfam" id="TIGR03695">
    <property type="entry name" value="menH_SHCHC"/>
    <property type="match status" value="1"/>
</dbReference>
<dbReference type="NCBIfam" id="NF008340">
    <property type="entry name" value="PRK11126.1"/>
    <property type="match status" value="1"/>
</dbReference>
<dbReference type="PANTHER" id="PTHR42916">
    <property type="entry name" value="2-SUCCINYL-5-ENOLPYRUVYL-6-HYDROXY-3-CYCLOHEXENE-1-CARBOXYLATE SYNTHASE"/>
    <property type="match status" value="1"/>
</dbReference>
<dbReference type="PANTHER" id="PTHR42916:SF1">
    <property type="entry name" value="PROTEIN PHYLLO, CHLOROPLASTIC"/>
    <property type="match status" value="1"/>
</dbReference>
<dbReference type="Pfam" id="PF12697">
    <property type="entry name" value="Abhydrolase_6"/>
    <property type="match status" value="1"/>
</dbReference>
<dbReference type="SUPFAM" id="SSF53474">
    <property type="entry name" value="alpha/beta-Hydrolases"/>
    <property type="match status" value="1"/>
</dbReference>
<protein>
    <recommendedName>
        <fullName evidence="1">2-succinyl-6-hydroxy-2,4-cyclohexadiene-1-carboxylate synthase</fullName>
        <shortName evidence="1">SHCHC synthase</shortName>
        <ecNumber evidence="1">4.2.99.20</ecNumber>
    </recommendedName>
</protein>
<sequence length="278" mass="31744">MSLVCRKFNGYNDRPWLVWLHGLLGCGDEWLPLVNLCAQHPSLVIDLPGHGDSTDVRVKDLLEMSCLLSETLAEQRISQYWLIGYSLGGRIAMHHACYGDIRGLCGLLIEGGNPGLFSQQERNNRLEHDRNWAGRFRSQPIEQVLSDWYQQPVFSDLLPEQRQQLIKVRRHNNGDGVANMLENTSLGHQPWLVPVLQQLTLPFVYLCGENDKKFQHLAKRCALPLQTIPRVGHNAHRANAVAFAAVVNHFLSLFNKEYEYDLPERRRTLFPNCMAGLL</sequence>
<reference key="1">
    <citation type="journal article" date="2003" name="Nat. Biotechnol.">
        <title>The genome sequence of the entomopathogenic bacterium Photorhabdus luminescens.</title>
        <authorList>
            <person name="Duchaud E."/>
            <person name="Rusniok C."/>
            <person name="Frangeul L."/>
            <person name="Buchrieser C."/>
            <person name="Givaudan A."/>
            <person name="Taourit S."/>
            <person name="Bocs S."/>
            <person name="Boursaux-Eude C."/>
            <person name="Chandler M."/>
            <person name="Charles J.-F."/>
            <person name="Dassa E."/>
            <person name="Derose R."/>
            <person name="Derzelle S."/>
            <person name="Freyssinet G."/>
            <person name="Gaudriault S."/>
            <person name="Medigue C."/>
            <person name="Lanois A."/>
            <person name="Powell K."/>
            <person name="Siguier P."/>
            <person name="Vincent R."/>
            <person name="Wingate V."/>
            <person name="Zouine M."/>
            <person name="Glaser P."/>
            <person name="Boemare N."/>
            <person name="Danchin A."/>
            <person name="Kunst F."/>
        </authorList>
    </citation>
    <scope>NUCLEOTIDE SEQUENCE [LARGE SCALE GENOMIC DNA]</scope>
    <source>
        <strain>DSM 15139 / CIP 105565 / TT01</strain>
    </source>
</reference>
<name>MENH_PHOLL</name>
<evidence type="ECO:0000255" key="1">
    <source>
        <dbReference type="HAMAP-Rule" id="MF_01660"/>
    </source>
</evidence>
<organism>
    <name type="scientific">Photorhabdus laumondii subsp. laumondii (strain DSM 15139 / CIP 105565 / TT01)</name>
    <name type="common">Photorhabdus luminescens subsp. laumondii</name>
    <dbReference type="NCBI Taxonomy" id="243265"/>
    <lineage>
        <taxon>Bacteria</taxon>
        <taxon>Pseudomonadati</taxon>
        <taxon>Pseudomonadota</taxon>
        <taxon>Gammaproteobacteria</taxon>
        <taxon>Enterobacterales</taxon>
        <taxon>Morganellaceae</taxon>
        <taxon>Photorhabdus</taxon>
    </lineage>
</organism>
<gene>
    <name evidence="1" type="primary">menH</name>
    <name type="ordered locus">plu3072</name>
</gene>
<keyword id="KW-0456">Lyase</keyword>
<keyword id="KW-0474">Menaquinone biosynthesis</keyword>
<keyword id="KW-1185">Reference proteome</keyword>
<feature type="chain" id="PRO_0000341916" description="2-succinyl-6-hydroxy-2,4-cyclohexadiene-1-carboxylate synthase">
    <location>
        <begin position="1"/>
        <end position="278"/>
    </location>
</feature>
<comment type="function">
    <text evidence="1">Catalyzes a proton abstraction reaction that results in 2,5-elimination of pyruvate from 2-succinyl-5-enolpyruvyl-6-hydroxy-3-cyclohexene-1-carboxylate (SEPHCHC) and the formation of 2-succinyl-6-hydroxy-2,4-cyclohexadiene-1-carboxylate (SHCHC).</text>
</comment>
<comment type="catalytic activity">
    <reaction evidence="1">
        <text>5-enolpyruvoyl-6-hydroxy-2-succinyl-cyclohex-3-ene-1-carboxylate = (1R,6R)-6-hydroxy-2-succinyl-cyclohexa-2,4-diene-1-carboxylate + pyruvate</text>
        <dbReference type="Rhea" id="RHEA:25597"/>
        <dbReference type="ChEBI" id="CHEBI:15361"/>
        <dbReference type="ChEBI" id="CHEBI:58689"/>
        <dbReference type="ChEBI" id="CHEBI:58818"/>
        <dbReference type="EC" id="4.2.99.20"/>
    </reaction>
</comment>
<comment type="pathway">
    <text evidence="1">Quinol/quinone metabolism; 1,4-dihydroxy-2-naphthoate biosynthesis; 1,4-dihydroxy-2-naphthoate from chorismate: step 3/7.</text>
</comment>
<comment type="pathway">
    <text evidence="1">Quinol/quinone metabolism; menaquinone biosynthesis.</text>
</comment>
<comment type="subunit">
    <text evidence="1">Monomer.</text>
</comment>
<comment type="similarity">
    <text evidence="1">Belongs to the AB hydrolase superfamily. MenH family.</text>
</comment>
<proteinExistence type="inferred from homology"/>
<accession>Q7N2K4</accession>